<proteinExistence type="inferred from homology"/>
<reference key="1">
    <citation type="journal article" date="2006" name="Genome Res.">
        <title>Skewed genomic variability in strains of the toxigenic bacterial pathogen, Clostridium perfringens.</title>
        <authorList>
            <person name="Myers G.S.A."/>
            <person name="Rasko D.A."/>
            <person name="Cheung J.K."/>
            <person name="Ravel J."/>
            <person name="Seshadri R."/>
            <person name="DeBoy R.T."/>
            <person name="Ren Q."/>
            <person name="Varga J."/>
            <person name="Awad M.M."/>
            <person name="Brinkac L.M."/>
            <person name="Daugherty S.C."/>
            <person name="Haft D.H."/>
            <person name="Dodson R.J."/>
            <person name="Madupu R."/>
            <person name="Nelson W.C."/>
            <person name="Rosovitz M.J."/>
            <person name="Sullivan S.A."/>
            <person name="Khouri H."/>
            <person name="Dimitrov G.I."/>
            <person name="Watkins K.L."/>
            <person name="Mulligan S."/>
            <person name="Benton J."/>
            <person name="Radune D."/>
            <person name="Fisher D.J."/>
            <person name="Atkins H.S."/>
            <person name="Hiscox T."/>
            <person name="Jost B.H."/>
            <person name="Billington S.J."/>
            <person name="Songer J.G."/>
            <person name="McClane B.A."/>
            <person name="Titball R.W."/>
            <person name="Rood J.I."/>
            <person name="Melville S.B."/>
            <person name="Paulsen I.T."/>
        </authorList>
    </citation>
    <scope>NUCLEOTIDE SEQUENCE [LARGE SCALE GENOMIC DNA]</scope>
    <source>
        <strain>SM101 / Type A</strain>
    </source>
</reference>
<gene>
    <name evidence="1" type="primary">purH</name>
    <name type="ordered locus">CPR_0675</name>
</gene>
<protein>
    <recommendedName>
        <fullName evidence="1">Bifunctional purine biosynthesis protein PurH</fullName>
    </recommendedName>
    <domain>
        <recommendedName>
            <fullName evidence="1">Phosphoribosylaminoimidazolecarboxamide formyltransferase</fullName>
            <ecNumber evidence="1">2.1.2.3</ecNumber>
        </recommendedName>
        <alternativeName>
            <fullName evidence="1">AICAR transformylase</fullName>
        </alternativeName>
    </domain>
    <domain>
        <recommendedName>
            <fullName evidence="1">IMP cyclohydrolase</fullName>
            <ecNumber evidence="1">3.5.4.10</ecNumber>
        </recommendedName>
        <alternativeName>
            <fullName evidence="1">ATIC</fullName>
        </alternativeName>
        <alternativeName>
            <fullName evidence="1">IMP synthase</fullName>
        </alternativeName>
        <alternativeName>
            <fullName evidence="1">Inosinicase</fullName>
        </alternativeName>
    </domain>
</protein>
<sequence length="501" mass="56108">MKKRALISVFDKDGVLELAKFLRDRDVEIISSGGTYKYLKENNIEVKEISEITDFPEMLDGRVKTLHPLVHAGILAIRDNKEHMKTLEKREINTIDYVVVNLYPFFEKVRENLSFEEKVEFIDIGGPTMLRAAAKNFKDVVVLSDKKDYEKVMNEIKENNCVSFKLRKTLAGKVFNLMSAYDAAISNFLLEGEEEYPEYLSVSYKKIQDLRYGENPHQGAAYYSSTEFDGAMNSFEILNGKALSYNNIKDLDIAWKVACEFEETACCALKHNTPCGVAVGENSKEVYLKAYDADPVSIFGGIVAINRKIDKATAEEMVKIFLEVVAAPDFDEDALEVLRTKKNLRVIKCKNTPQAKNYMVTVDGGILVQGEDNKLANEYKVVTKKEPTEMELRDMIFGMKVVKYVKSNAIVVVKDGVATGIGGGQVNRIWATKEALERGKGGAVLASDAFFPFRDCVDEAAKNGIKAIIQPGGSIRDEESVEACNEHGISMVFTGVRHFKH</sequence>
<name>PUR9_CLOPS</name>
<keyword id="KW-0378">Hydrolase</keyword>
<keyword id="KW-0511">Multifunctional enzyme</keyword>
<keyword id="KW-0658">Purine biosynthesis</keyword>
<keyword id="KW-0808">Transferase</keyword>
<organism>
    <name type="scientific">Clostridium perfringens (strain SM101 / Type A)</name>
    <dbReference type="NCBI Taxonomy" id="289380"/>
    <lineage>
        <taxon>Bacteria</taxon>
        <taxon>Bacillati</taxon>
        <taxon>Bacillota</taxon>
        <taxon>Clostridia</taxon>
        <taxon>Eubacteriales</taxon>
        <taxon>Clostridiaceae</taxon>
        <taxon>Clostridium</taxon>
    </lineage>
</organism>
<accession>Q0SV48</accession>
<feature type="chain" id="PRO_1000018881" description="Bifunctional purine biosynthesis protein PurH">
    <location>
        <begin position="1"/>
        <end position="501"/>
    </location>
</feature>
<feature type="domain" description="MGS-like" evidence="2">
    <location>
        <begin position="1"/>
        <end position="144"/>
    </location>
</feature>
<evidence type="ECO:0000255" key="1">
    <source>
        <dbReference type="HAMAP-Rule" id="MF_00139"/>
    </source>
</evidence>
<evidence type="ECO:0000255" key="2">
    <source>
        <dbReference type="PROSITE-ProRule" id="PRU01202"/>
    </source>
</evidence>
<comment type="catalytic activity">
    <reaction evidence="1">
        <text>(6R)-10-formyltetrahydrofolate + 5-amino-1-(5-phospho-beta-D-ribosyl)imidazole-4-carboxamide = 5-formamido-1-(5-phospho-D-ribosyl)imidazole-4-carboxamide + (6S)-5,6,7,8-tetrahydrofolate</text>
        <dbReference type="Rhea" id="RHEA:22192"/>
        <dbReference type="ChEBI" id="CHEBI:57453"/>
        <dbReference type="ChEBI" id="CHEBI:58467"/>
        <dbReference type="ChEBI" id="CHEBI:58475"/>
        <dbReference type="ChEBI" id="CHEBI:195366"/>
        <dbReference type="EC" id="2.1.2.3"/>
    </reaction>
</comment>
<comment type="catalytic activity">
    <reaction evidence="1">
        <text>IMP + H2O = 5-formamido-1-(5-phospho-D-ribosyl)imidazole-4-carboxamide</text>
        <dbReference type="Rhea" id="RHEA:18445"/>
        <dbReference type="ChEBI" id="CHEBI:15377"/>
        <dbReference type="ChEBI" id="CHEBI:58053"/>
        <dbReference type="ChEBI" id="CHEBI:58467"/>
        <dbReference type="EC" id="3.5.4.10"/>
    </reaction>
</comment>
<comment type="pathway">
    <text evidence="1">Purine metabolism; IMP biosynthesis via de novo pathway; 5-formamido-1-(5-phospho-D-ribosyl)imidazole-4-carboxamide from 5-amino-1-(5-phospho-D-ribosyl)imidazole-4-carboxamide (10-formyl THF route): step 1/1.</text>
</comment>
<comment type="pathway">
    <text evidence="1">Purine metabolism; IMP biosynthesis via de novo pathway; IMP from 5-formamido-1-(5-phospho-D-ribosyl)imidazole-4-carboxamide: step 1/1.</text>
</comment>
<comment type="domain">
    <text evidence="1">The IMP cyclohydrolase activity resides in the N-terminal region.</text>
</comment>
<comment type="similarity">
    <text evidence="1">Belongs to the PurH family.</text>
</comment>
<dbReference type="EC" id="2.1.2.3" evidence="1"/>
<dbReference type="EC" id="3.5.4.10" evidence="1"/>
<dbReference type="EMBL" id="CP000312">
    <property type="protein sequence ID" value="ABG87320.1"/>
    <property type="molecule type" value="Genomic_DNA"/>
</dbReference>
<dbReference type="RefSeq" id="WP_011591754.1">
    <property type="nucleotide sequence ID" value="NC_008262.1"/>
</dbReference>
<dbReference type="SMR" id="Q0SV48"/>
<dbReference type="KEGG" id="cpr:CPR_0675"/>
<dbReference type="UniPathway" id="UPA00074">
    <property type="reaction ID" value="UER00133"/>
</dbReference>
<dbReference type="UniPathway" id="UPA00074">
    <property type="reaction ID" value="UER00135"/>
</dbReference>
<dbReference type="Proteomes" id="UP000001824">
    <property type="component" value="Chromosome"/>
</dbReference>
<dbReference type="GO" id="GO:0005829">
    <property type="term" value="C:cytosol"/>
    <property type="evidence" value="ECO:0007669"/>
    <property type="project" value="TreeGrafter"/>
</dbReference>
<dbReference type="GO" id="GO:0003937">
    <property type="term" value="F:IMP cyclohydrolase activity"/>
    <property type="evidence" value="ECO:0007669"/>
    <property type="project" value="UniProtKB-UniRule"/>
</dbReference>
<dbReference type="GO" id="GO:0004643">
    <property type="term" value="F:phosphoribosylaminoimidazolecarboxamide formyltransferase activity"/>
    <property type="evidence" value="ECO:0007669"/>
    <property type="project" value="UniProtKB-UniRule"/>
</dbReference>
<dbReference type="GO" id="GO:0006189">
    <property type="term" value="P:'de novo' IMP biosynthetic process"/>
    <property type="evidence" value="ECO:0007669"/>
    <property type="project" value="UniProtKB-UniRule"/>
</dbReference>
<dbReference type="CDD" id="cd01421">
    <property type="entry name" value="IMPCH"/>
    <property type="match status" value="1"/>
</dbReference>
<dbReference type="FunFam" id="3.40.140.20:FF:000001">
    <property type="entry name" value="Bifunctional purine biosynthesis protein PurH"/>
    <property type="match status" value="1"/>
</dbReference>
<dbReference type="FunFam" id="3.40.140.20:FF:000002">
    <property type="entry name" value="Bifunctional purine biosynthesis protein PurH"/>
    <property type="match status" value="1"/>
</dbReference>
<dbReference type="FunFam" id="3.40.50.1380:FF:000001">
    <property type="entry name" value="Bifunctional purine biosynthesis protein PurH"/>
    <property type="match status" value="1"/>
</dbReference>
<dbReference type="Gene3D" id="3.40.140.20">
    <property type="match status" value="2"/>
</dbReference>
<dbReference type="Gene3D" id="3.40.50.1380">
    <property type="entry name" value="Methylglyoxal synthase-like domain"/>
    <property type="match status" value="1"/>
</dbReference>
<dbReference type="HAMAP" id="MF_00139">
    <property type="entry name" value="PurH"/>
    <property type="match status" value="1"/>
</dbReference>
<dbReference type="InterPro" id="IPR024051">
    <property type="entry name" value="AICAR_Tfase_dup_dom_sf"/>
</dbReference>
<dbReference type="InterPro" id="IPR016193">
    <property type="entry name" value="Cytidine_deaminase-like"/>
</dbReference>
<dbReference type="InterPro" id="IPR011607">
    <property type="entry name" value="MGS-like_dom"/>
</dbReference>
<dbReference type="InterPro" id="IPR036914">
    <property type="entry name" value="MGS-like_dom_sf"/>
</dbReference>
<dbReference type="InterPro" id="IPR002695">
    <property type="entry name" value="PurH-like"/>
</dbReference>
<dbReference type="NCBIfam" id="NF002049">
    <property type="entry name" value="PRK00881.1"/>
    <property type="match status" value="1"/>
</dbReference>
<dbReference type="NCBIfam" id="TIGR00355">
    <property type="entry name" value="purH"/>
    <property type="match status" value="1"/>
</dbReference>
<dbReference type="PANTHER" id="PTHR11692:SF0">
    <property type="entry name" value="BIFUNCTIONAL PURINE BIOSYNTHESIS PROTEIN ATIC"/>
    <property type="match status" value="1"/>
</dbReference>
<dbReference type="PANTHER" id="PTHR11692">
    <property type="entry name" value="BIFUNCTIONAL PURINE BIOSYNTHESIS PROTEIN PURH"/>
    <property type="match status" value="1"/>
</dbReference>
<dbReference type="Pfam" id="PF01808">
    <property type="entry name" value="AICARFT_IMPCHas"/>
    <property type="match status" value="1"/>
</dbReference>
<dbReference type="Pfam" id="PF02142">
    <property type="entry name" value="MGS"/>
    <property type="match status" value="1"/>
</dbReference>
<dbReference type="PIRSF" id="PIRSF000414">
    <property type="entry name" value="AICARFT_IMPCHas"/>
    <property type="match status" value="1"/>
</dbReference>
<dbReference type="SMART" id="SM00798">
    <property type="entry name" value="AICARFT_IMPCHas"/>
    <property type="match status" value="1"/>
</dbReference>
<dbReference type="SMART" id="SM00851">
    <property type="entry name" value="MGS"/>
    <property type="match status" value="1"/>
</dbReference>
<dbReference type="SUPFAM" id="SSF53927">
    <property type="entry name" value="Cytidine deaminase-like"/>
    <property type="match status" value="1"/>
</dbReference>
<dbReference type="SUPFAM" id="SSF52335">
    <property type="entry name" value="Methylglyoxal synthase-like"/>
    <property type="match status" value="1"/>
</dbReference>
<dbReference type="PROSITE" id="PS51855">
    <property type="entry name" value="MGS"/>
    <property type="match status" value="1"/>
</dbReference>